<organism>
    <name type="scientific">Streptomyces lividans</name>
    <dbReference type="NCBI Taxonomy" id="1916"/>
    <lineage>
        <taxon>Bacteria</taxon>
        <taxon>Bacillati</taxon>
        <taxon>Actinomycetota</taxon>
        <taxon>Actinomycetes</taxon>
        <taxon>Kitasatosporales</taxon>
        <taxon>Streptomycetaceae</taxon>
        <taxon>Streptomyces</taxon>
    </lineage>
</organism>
<protein>
    <recommendedName>
        <fullName>Protein rep</fullName>
    </recommendedName>
</protein>
<keyword id="KW-0614">Plasmid</keyword>
<keyword id="KW-0616">Plasmid partition</keyword>
<dbReference type="EMBL" id="M21778">
    <property type="protein sequence ID" value="AAA88404.1"/>
    <property type="molecule type" value="Genomic_DNA"/>
</dbReference>
<dbReference type="PIR" id="A31844">
    <property type="entry name" value="A31844"/>
</dbReference>
<dbReference type="RefSeq" id="NP_040441.1">
    <property type="nucleotide sequence ID" value="NC_001387.1"/>
</dbReference>
<dbReference type="RefSeq" id="WP_010889913.1">
    <property type="nucleotide sequence ID" value="NC_001387.1"/>
</dbReference>
<dbReference type="GO" id="GO:0030541">
    <property type="term" value="P:plasmid partitioning"/>
    <property type="evidence" value="ECO:0007669"/>
    <property type="project" value="UniProtKB-KW"/>
</dbReference>
<reference key="1">
    <citation type="journal article" date="1988" name="J. Bacteriol.">
        <title>Complete nucleotide sequence of the Streptomyces lividans plasmid pIJ101 and correlation of the sequence with genetic properties.</title>
        <authorList>
            <person name="Kendall K.J."/>
            <person name="Cohen S.N."/>
        </authorList>
    </citation>
    <scope>NUCLEOTIDE SEQUENCE [GENOMIC DNA]</scope>
</reference>
<proteinExistence type="inferred from homology"/>
<comment type="function">
    <text>Essential for the autonomous replication of the plasmid pIJ101.</text>
</comment>
<comment type="similarity">
    <text evidence="2">Belongs to the Gram-positive plasmids replication protein type 1 family.</text>
</comment>
<sequence length="456" mass="49617">MDPASGVIVAQTAAGTSVVLGLMRCGRIWLCPVCAATIRHKRAEEITAAVVEWIKRGGTAYLVTFTARHGHTDRLADLMDALQGTRKTPDSPRRPGAYQRLITGGTWAGRRAKDGHRAADREGIRDRIGYVGMIRATEVTVGQINGWHPHIHAIVLVGGRTEGERSAKQIVATFEPTGAALDEWQGHWRSVWTAALRKVNPAFTPDDRHGVDFKRLETERDANDLAEYIAKTQDGKAPALELARADLKTATGGNVAPFELLGRIGDLTGGMTEDDAAGVGSLEWNLSRWHEYERATRGRRAIEWTRYLRQMLGLDGGDTEADDLDLLLAADADGGELRAGVAVTEDGWHAVTRRALDLEATRAAEGKDGNEDPAAVGERVREVLALADAADTVVVLTAGEVAEAYADMLAALAQRREEATARRRREQDDDQDDDADDRQERAARHIARLASGPTSH</sequence>
<gene>
    <name type="primary">rep</name>
</gene>
<accession>P22406</accession>
<geneLocation type="plasmid">
    <name>pIJ101</name>
</geneLocation>
<name>REP_STRLI</name>
<feature type="chain" id="PRO_0000068315" description="Protein rep">
    <location>
        <begin position="1"/>
        <end position="456"/>
    </location>
</feature>
<feature type="region of interest" description="Disordered" evidence="1">
    <location>
        <begin position="416"/>
        <end position="456"/>
    </location>
</feature>
<feature type="compositionally biased region" description="Basic and acidic residues" evidence="1">
    <location>
        <begin position="416"/>
        <end position="427"/>
    </location>
</feature>
<feature type="compositionally biased region" description="Acidic residues" evidence="1">
    <location>
        <begin position="428"/>
        <end position="437"/>
    </location>
</feature>
<evidence type="ECO:0000256" key="1">
    <source>
        <dbReference type="SAM" id="MobiDB-lite"/>
    </source>
</evidence>
<evidence type="ECO:0000305" key="2"/>